<dbReference type="EC" id="2.7.2.3" evidence="1"/>
<dbReference type="EMBL" id="AL766853">
    <property type="protein sequence ID" value="CAD47468.1"/>
    <property type="molecule type" value="Genomic_DNA"/>
</dbReference>
<dbReference type="RefSeq" id="WP_001096752.1">
    <property type="nucleotide sequence ID" value="NC_004368.1"/>
</dbReference>
<dbReference type="SMR" id="Q8E3F0"/>
<dbReference type="KEGG" id="san:gbs1809"/>
<dbReference type="eggNOG" id="COG0126">
    <property type="taxonomic scope" value="Bacteria"/>
</dbReference>
<dbReference type="HOGENOM" id="CLU_025427_0_1_9"/>
<dbReference type="UniPathway" id="UPA00109">
    <property type="reaction ID" value="UER00185"/>
</dbReference>
<dbReference type="Proteomes" id="UP000000823">
    <property type="component" value="Chromosome"/>
</dbReference>
<dbReference type="GO" id="GO:0005829">
    <property type="term" value="C:cytosol"/>
    <property type="evidence" value="ECO:0007669"/>
    <property type="project" value="TreeGrafter"/>
</dbReference>
<dbReference type="GO" id="GO:0043531">
    <property type="term" value="F:ADP binding"/>
    <property type="evidence" value="ECO:0007669"/>
    <property type="project" value="TreeGrafter"/>
</dbReference>
<dbReference type="GO" id="GO:0005524">
    <property type="term" value="F:ATP binding"/>
    <property type="evidence" value="ECO:0007669"/>
    <property type="project" value="UniProtKB-KW"/>
</dbReference>
<dbReference type="GO" id="GO:0004618">
    <property type="term" value="F:phosphoglycerate kinase activity"/>
    <property type="evidence" value="ECO:0007669"/>
    <property type="project" value="UniProtKB-UniRule"/>
</dbReference>
<dbReference type="GO" id="GO:0006094">
    <property type="term" value="P:gluconeogenesis"/>
    <property type="evidence" value="ECO:0007669"/>
    <property type="project" value="TreeGrafter"/>
</dbReference>
<dbReference type="GO" id="GO:0006096">
    <property type="term" value="P:glycolytic process"/>
    <property type="evidence" value="ECO:0007669"/>
    <property type="project" value="UniProtKB-UniRule"/>
</dbReference>
<dbReference type="FunFam" id="3.40.50.1260:FF:000001">
    <property type="entry name" value="Phosphoglycerate kinase"/>
    <property type="match status" value="1"/>
</dbReference>
<dbReference type="FunFam" id="3.40.50.1260:FF:000008">
    <property type="entry name" value="Phosphoglycerate kinase"/>
    <property type="match status" value="1"/>
</dbReference>
<dbReference type="Gene3D" id="3.40.50.1260">
    <property type="entry name" value="Phosphoglycerate kinase, N-terminal domain"/>
    <property type="match status" value="2"/>
</dbReference>
<dbReference type="HAMAP" id="MF_00145">
    <property type="entry name" value="Phosphoglyc_kinase"/>
    <property type="match status" value="1"/>
</dbReference>
<dbReference type="InterPro" id="IPR001576">
    <property type="entry name" value="Phosphoglycerate_kinase"/>
</dbReference>
<dbReference type="InterPro" id="IPR015911">
    <property type="entry name" value="Phosphoglycerate_kinase_CS"/>
</dbReference>
<dbReference type="InterPro" id="IPR015824">
    <property type="entry name" value="Phosphoglycerate_kinase_N"/>
</dbReference>
<dbReference type="InterPro" id="IPR036043">
    <property type="entry name" value="Phosphoglycerate_kinase_sf"/>
</dbReference>
<dbReference type="PANTHER" id="PTHR11406">
    <property type="entry name" value="PHOSPHOGLYCERATE KINASE"/>
    <property type="match status" value="1"/>
</dbReference>
<dbReference type="PANTHER" id="PTHR11406:SF23">
    <property type="entry name" value="PHOSPHOGLYCERATE KINASE 1, CHLOROPLASTIC-RELATED"/>
    <property type="match status" value="1"/>
</dbReference>
<dbReference type="Pfam" id="PF00162">
    <property type="entry name" value="PGK"/>
    <property type="match status" value="1"/>
</dbReference>
<dbReference type="PIRSF" id="PIRSF000724">
    <property type="entry name" value="Pgk"/>
    <property type="match status" value="1"/>
</dbReference>
<dbReference type="PRINTS" id="PR00477">
    <property type="entry name" value="PHGLYCKINASE"/>
</dbReference>
<dbReference type="SUPFAM" id="SSF53748">
    <property type="entry name" value="Phosphoglycerate kinase"/>
    <property type="match status" value="1"/>
</dbReference>
<dbReference type="PROSITE" id="PS00111">
    <property type="entry name" value="PGLYCERATE_KINASE"/>
    <property type="match status" value="1"/>
</dbReference>
<sequence>MAKLTVKDVDLKGKKVLVRVDFNVPLKDGVITNDNRITAALPTIKYIIEQGGRAILFSHLGRVKEEADKEGKSLAPVAADLAAKLGQDVVFPGVTRGAKLEEAINALEDGQVLLVENTRFEDVDGKKESKNDEELGKYWASLGDGIFVNDAFGTAHRAHASNVGISANVEKAVAGFLLENEIAYIQEAVETPERPFVAILGGSKVSDKIGVIENLLEKADKVLIGGGMTYTFYKAQGIEIGNSLVEEDKLDVAKDLLEKSNGKLILPVDSKEANAFAGYTEVRDTEGEAVSEGFLGLDIGPKSIAKFDEALTGAKTVVWNGPMGVFENPDFQAGTIGVMDAIVKQLGVKSIIGGGDSAAAAINLGRADKFSWISTGGGASMELLEGKVLPGLAALTEK</sequence>
<reference key="1">
    <citation type="journal article" date="2002" name="Mol. Microbiol.">
        <title>Genome sequence of Streptococcus agalactiae, a pathogen causing invasive neonatal disease.</title>
        <authorList>
            <person name="Glaser P."/>
            <person name="Rusniok C."/>
            <person name="Buchrieser C."/>
            <person name="Chevalier F."/>
            <person name="Frangeul L."/>
            <person name="Msadek T."/>
            <person name="Zouine M."/>
            <person name="Couve E."/>
            <person name="Lalioui L."/>
            <person name="Poyart C."/>
            <person name="Trieu-Cuot P."/>
            <person name="Kunst F."/>
        </authorList>
    </citation>
    <scope>NUCLEOTIDE SEQUENCE [LARGE SCALE GENOMIC DNA]</scope>
    <source>
        <strain>NEM316</strain>
    </source>
</reference>
<feature type="chain" id="PRO_0000146010" description="Phosphoglycerate kinase">
    <location>
        <begin position="1"/>
        <end position="398"/>
    </location>
</feature>
<feature type="binding site" evidence="1">
    <location>
        <begin position="21"/>
        <end position="23"/>
    </location>
    <ligand>
        <name>substrate</name>
    </ligand>
</feature>
<feature type="binding site" evidence="1">
    <location>
        <position position="36"/>
    </location>
    <ligand>
        <name>substrate</name>
    </ligand>
</feature>
<feature type="binding site" evidence="1">
    <location>
        <begin position="59"/>
        <end position="62"/>
    </location>
    <ligand>
        <name>substrate</name>
    </ligand>
</feature>
<feature type="binding site" evidence="1">
    <location>
        <position position="119"/>
    </location>
    <ligand>
        <name>substrate</name>
    </ligand>
</feature>
<feature type="binding site" evidence="1">
    <location>
        <position position="157"/>
    </location>
    <ligand>
        <name>substrate</name>
    </ligand>
</feature>
<feature type="binding site" evidence="1">
    <location>
        <position position="208"/>
    </location>
    <ligand>
        <name>ATP</name>
        <dbReference type="ChEBI" id="CHEBI:30616"/>
    </ligand>
</feature>
<feature type="binding site" evidence="1">
    <location>
        <position position="296"/>
    </location>
    <ligand>
        <name>ATP</name>
        <dbReference type="ChEBI" id="CHEBI:30616"/>
    </ligand>
</feature>
<feature type="binding site" evidence="1">
    <location>
        <position position="327"/>
    </location>
    <ligand>
        <name>ATP</name>
        <dbReference type="ChEBI" id="CHEBI:30616"/>
    </ligand>
</feature>
<feature type="binding site" evidence="1">
    <location>
        <begin position="354"/>
        <end position="357"/>
    </location>
    <ligand>
        <name>ATP</name>
        <dbReference type="ChEBI" id="CHEBI:30616"/>
    </ligand>
</feature>
<evidence type="ECO:0000255" key="1">
    <source>
        <dbReference type="HAMAP-Rule" id="MF_00145"/>
    </source>
</evidence>
<protein>
    <recommendedName>
        <fullName evidence="1">Phosphoglycerate kinase</fullName>
        <ecNumber evidence="1">2.7.2.3</ecNumber>
    </recommendedName>
</protein>
<name>PGK_STRA3</name>
<keyword id="KW-0067">ATP-binding</keyword>
<keyword id="KW-0963">Cytoplasm</keyword>
<keyword id="KW-0324">Glycolysis</keyword>
<keyword id="KW-0418">Kinase</keyword>
<keyword id="KW-0547">Nucleotide-binding</keyword>
<keyword id="KW-0808">Transferase</keyword>
<gene>
    <name evidence="1" type="primary">pgk</name>
    <name type="ordered locus">gbs1809</name>
</gene>
<comment type="catalytic activity">
    <reaction evidence="1">
        <text>(2R)-3-phosphoglycerate + ATP = (2R)-3-phospho-glyceroyl phosphate + ADP</text>
        <dbReference type="Rhea" id="RHEA:14801"/>
        <dbReference type="ChEBI" id="CHEBI:30616"/>
        <dbReference type="ChEBI" id="CHEBI:57604"/>
        <dbReference type="ChEBI" id="CHEBI:58272"/>
        <dbReference type="ChEBI" id="CHEBI:456216"/>
        <dbReference type="EC" id="2.7.2.3"/>
    </reaction>
</comment>
<comment type="pathway">
    <text evidence="1">Carbohydrate degradation; glycolysis; pyruvate from D-glyceraldehyde 3-phosphate: step 2/5.</text>
</comment>
<comment type="subunit">
    <text evidence="1">Monomer.</text>
</comment>
<comment type="subcellular location">
    <subcellularLocation>
        <location evidence="1">Cytoplasm</location>
    </subcellularLocation>
</comment>
<comment type="similarity">
    <text evidence="1">Belongs to the phosphoglycerate kinase family.</text>
</comment>
<organism>
    <name type="scientific">Streptococcus agalactiae serotype III (strain NEM316)</name>
    <dbReference type="NCBI Taxonomy" id="211110"/>
    <lineage>
        <taxon>Bacteria</taxon>
        <taxon>Bacillati</taxon>
        <taxon>Bacillota</taxon>
        <taxon>Bacilli</taxon>
        <taxon>Lactobacillales</taxon>
        <taxon>Streptococcaceae</taxon>
        <taxon>Streptococcus</taxon>
    </lineage>
</organism>
<proteinExistence type="inferred from homology"/>
<accession>Q8E3F0</accession>